<comment type="function">
    <text evidence="3">Component of the cytochrome c oxidase, the last enzyme in the mitochondrial electron transport chain which drives oxidative phosphorylation. The respiratory chain contains 3 multisubunit complexes succinate dehydrogenase (complex II, CII), ubiquinol-cytochrome c oxidoreductase (cytochrome b-c1 complex, complex III, CIII) and cytochrome c oxidase (complex IV, CIV), that cooperate to transfer electrons derived from NADH and succinate to molecular oxygen, creating an electrochemical gradient over the inner membrane that drives transmembrane transport and the ATP synthase. Cytochrome c oxidase is the component of the respiratory chain that catalyzes the reduction of oxygen to water. Electrons originating from reduced cytochrome c in the intermembrane space (IMS) are transferred via the dinuclear copper A center (CU(A)) of subunit 2 and heme A of subunit 1 to the active site in subunit 1, a binuclear center (BNC) formed by heme A3 and copper B (CU(B)). The BNC reduces molecular oxygen to 2 water molecules using 4 electrons from cytochrome c in the IMS and 4 protons from the mitochondrial matrix.</text>
</comment>
<comment type="catalytic activity">
    <reaction evidence="3">
        <text>4 Fe(II)-[cytochrome c] + O2 + 8 H(+)(in) = 4 Fe(III)-[cytochrome c] + 2 H2O + 4 H(+)(out)</text>
        <dbReference type="Rhea" id="RHEA:11436"/>
        <dbReference type="Rhea" id="RHEA-COMP:10350"/>
        <dbReference type="Rhea" id="RHEA-COMP:14399"/>
        <dbReference type="ChEBI" id="CHEBI:15377"/>
        <dbReference type="ChEBI" id="CHEBI:15378"/>
        <dbReference type="ChEBI" id="CHEBI:15379"/>
        <dbReference type="ChEBI" id="CHEBI:29033"/>
        <dbReference type="ChEBI" id="CHEBI:29034"/>
        <dbReference type="EC" id="7.1.1.9"/>
    </reaction>
    <physiologicalReaction direction="left-to-right" evidence="3">
        <dbReference type="Rhea" id="RHEA:11437"/>
    </physiologicalReaction>
</comment>
<comment type="cofactor">
    <cofactor evidence="4">
        <name>Cu cation</name>
        <dbReference type="ChEBI" id="CHEBI:23378"/>
    </cofactor>
    <text evidence="4">Binds a dinuclear copper A center per subunit.</text>
</comment>
<comment type="subunit">
    <text evidence="1 4">Component of the cytochrome c oxidase (complex IV, CIV), a multisubunit enzyme composed of 14 subunits. The complex is composed of a catalytic core of 3 subunits MT-CO1, MT-CO2 and MT-CO3, encoded in the mitochondrial DNA, and 11 supernumerary subunits COX4I, COX5A, COX5B, COX6A, COX6B, COX6C, COX7A, COX7B, COX7C, COX8 and NDUFA4, which are encoded in the nuclear genome. The complex exists as a monomer or a dimer and forms supercomplexes (SCs) in the inner mitochondrial membrane with NADH-ubiquinone oxidoreductase (complex I, CI) and ubiquinol-cytochrome c oxidoreductase (cytochrome b-c1 complex, complex III, CIII), resulting in different assemblies (supercomplex SCI(1)III(2)IV(1) and megacomplex MCI(2)III(2)IV(2)) (By similarity). Found in a complex with TMEM177, COA6, COX18, COX20, SCO1 and SCO2. Interacts with TMEM177 in a COX20-dependent manner. Interacts with COX20. Interacts with COX16 (By similarity).</text>
</comment>
<comment type="subcellular location">
    <subcellularLocation>
        <location evidence="4">Mitochondrion inner membrane</location>
        <topology evidence="4">Multi-pass membrane protein</topology>
    </subcellularLocation>
</comment>
<comment type="similarity">
    <text evidence="5">Belongs to the cytochrome c oxidase subunit 2 family.</text>
</comment>
<geneLocation type="mitochondrion"/>
<evidence type="ECO:0000250" key="1">
    <source>
        <dbReference type="UniProtKB" id="P00403"/>
    </source>
</evidence>
<evidence type="ECO:0000250" key="2">
    <source>
        <dbReference type="UniProtKB" id="P00406"/>
    </source>
</evidence>
<evidence type="ECO:0000250" key="3">
    <source>
        <dbReference type="UniProtKB" id="P00410"/>
    </source>
</evidence>
<evidence type="ECO:0000250" key="4">
    <source>
        <dbReference type="UniProtKB" id="P68530"/>
    </source>
</evidence>
<evidence type="ECO:0000305" key="5"/>
<proteinExistence type="inferred from homology"/>
<protein>
    <recommendedName>
        <fullName>Cytochrome c oxidase subunit 2</fullName>
        <ecNumber>7.1.1.9</ecNumber>
    </recommendedName>
    <alternativeName>
        <fullName>Cytochrome c oxidase polypeptide II</fullName>
    </alternativeName>
</protein>
<sequence>MAYPFQLGLQDATSPIMEELLHFHDHTLMIVFLISSLVLYIISLMLTTKLTHTSTMDAQEVETVWTILPAIILILIALPSLRILYMMDEINNPSLTVKTMGHQWYWSYEYTDYEDLNFDSYMIPTQELKPGELRLLEVDNRVVLPMEMTVRMLVSSEDVLHSWAVPSLGLKTDAIPGRLNQTTLMAMRPGLYYGQCSEICGSNHSFMPIVLEMVPLSYFETWSALMV</sequence>
<gene>
    <name type="primary">MT-CO2</name>
    <name type="synonym">COII</name>
    <name type="synonym">COX2</name>
    <name type="synonym">COXII</name>
    <name type="synonym">MTCO2</name>
</gene>
<reference key="1">
    <citation type="journal article" date="1997" name="Syst. Biol.">
        <title>Molecular systematics of the Canidae.</title>
        <authorList>
            <person name="Wayne R.K."/>
            <person name="Geffen E."/>
            <person name="Girman D.J."/>
            <person name="Koepfli K.-P."/>
            <person name="Lau L.M."/>
            <person name="Marshall C.R."/>
        </authorList>
    </citation>
    <scope>NUCLEOTIDE SEQUENCE [GENOMIC DNA]</scope>
    <source>
        <strain>1</strain>
    </source>
</reference>
<accession>O47671</accession>
<organism>
    <name type="scientific">Canis mesomelas elongae</name>
    <name type="common">Eastern African black-backed jackal</name>
    <dbReference type="NCBI Taxonomy" id="69045"/>
    <lineage>
        <taxon>Eukaryota</taxon>
        <taxon>Metazoa</taxon>
        <taxon>Chordata</taxon>
        <taxon>Craniata</taxon>
        <taxon>Vertebrata</taxon>
        <taxon>Euteleostomi</taxon>
        <taxon>Mammalia</taxon>
        <taxon>Eutheria</taxon>
        <taxon>Laurasiatheria</taxon>
        <taxon>Carnivora</taxon>
        <taxon>Caniformia</taxon>
        <taxon>Canidae</taxon>
        <taxon>Canis</taxon>
    </lineage>
</organism>
<feature type="chain" id="PRO_0000183536" description="Cytochrome c oxidase subunit 2">
    <location>
        <begin position="1"/>
        <end position="227"/>
    </location>
</feature>
<feature type="topological domain" description="Mitochondrial intermembrane" evidence="4">
    <location>
        <begin position="1"/>
        <end position="14"/>
    </location>
</feature>
<feature type="transmembrane region" description="Helical; Name=I" evidence="4">
    <location>
        <begin position="15"/>
        <end position="45"/>
    </location>
</feature>
<feature type="topological domain" description="Mitochondrial matrix" evidence="4">
    <location>
        <begin position="46"/>
        <end position="59"/>
    </location>
</feature>
<feature type="transmembrane region" description="Helical; Name=II" evidence="4">
    <location>
        <begin position="60"/>
        <end position="87"/>
    </location>
</feature>
<feature type="topological domain" description="Mitochondrial intermembrane" evidence="4">
    <location>
        <begin position="88"/>
        <end position="227"/>
    </location>
</feature>
<feature type="binding site" evidence="4">
    <location>
        <position position="161"/>
    </location>
    <ligand>
        <name>Cu cation</name>
        <dbReference type="ChEBI" id="CHEBI:23378"/>
        <label>A1</label>
    </ligand>
</feature>
<feature type="binding site" evidence="4">
    <location>
        <position position="196"/>
    </location>
    <ligand>
        <name>Cu cation</name>
        <dbReference type="ChEBI" id="CHEBI:23378"/>
        <label>A1</label>
    </ligand>
</feature>
<feature type="binding site" evidence="4">
    <location>
        <position position="196"/>
    </location>
    <ligand>
        <name>Cu cation</name>
        <dbReference type="ChEBI" id="CHEBI:23378"/>
        <label>A2</label>
    </ligand>
</feature>
<feature type="binding site" evidence="4">
    <location>
        <position position="198"/>
    </location>
    <ligand>
        <name>Cu cation</name>
        <dbReference type="ChEBI" id="CHEBI:23378"/>
        <label>A2</label>
    </ligand>
</feature>
<feature type="binding site" evidence="4">
    <location>
        <position position="198"/>
    </location>
    <ligand>
        <name>Mg(2+)</name>
        <dbReference type="ChEBI" id="CHEBI:18420"/>
        <note>ligand shared with MT-CO1</note>
    </ligand>
</feature>
<feature type="binding site" evidence="4">
    <location>
        <position position="200"/>
    </location>
    <ligand>
        <name>Cu cation</name>
        <dbReference type="ChEBI" id="CHEBI:23378"/>
        <label>A1</label>
    </ligand>
</feature>
<feature type="binding site" evidence="4">
    <location>
        <position position="200"/>
    </location>
    <ligand>
        <name>Cu cation</name>
        <dbReference type="ChEBI" id="CHEBI:23378"/>
        <label>A2</label>
    </ligand>
</feature>
<feature type="binding site" evidence="4">
    <location>
        <position position="204"/>
    </location>
    <ligand>
        <name>Cu cation</name>
        <dbReference type="ChEBI" id="CHEBI:23378"/>
        <label>A2</label>
    </ligand>
</feature>
<feature type="binding site" evidence="4">
    <location>
        <position position="207"/>
    </location>
    <ligand>
        <name>Cu cation</name>
        <dbReference type="ChEBI" id="CHEBI:23378"/>
        <label>A1</label>
    </ligand>
</feature>
<feature type="modified residue" description="Phosphotyrosine" evidence="2">
    <location>
        <position position="218"/>
    </location>
</feature>
<name>COX2_CANME</name>
<keyword id="KW-0186">Copper</keyword>
<keyword id="KW-0249">Electron transport</keyword>
<keyword id="KW-0460">Magnesium</keyword>
<keyword id="KW-0472">Membrane</keyword>
<keyword id="KW-0479">Metal-binding</keyword>
<keyword id="KW-0496">Mitochondrion</keyword>
<keyword id="KW-0999">Mitochondrion inner membrane</keyword>
<keyword id="KW-0597">Phosphoprotein</keyword>
<keyword id="KW-0679">Respiratory chain</keyword>
<keyword id="KW-1278">Translocase</keyword>
<keyword id="KW-0812">Transmembrane</keyword>
<keyword id="KW-1133">Transmembrane helix</keyword>
<keyword id="KW-0813">Transport</keyword>
<dbReference type="EC" id="7.1.1.9"/>
<dbReference type="EMBL" id="AF028214">
    <property type="protein sequence ID" value="AAC00107.1"/>
    <property type="molecule type" value="Genomic_DNA"/>
</dbReference>
<dbReference type="SMR" id="O47671"/>
<dbReference type="GO" id="GO:0005743">
    <property type="term" value="C:mitochondrial inner membrane"/>
    <property type="evidence" value="ECO:0007669"/>
    <property type="project" value="UniProtKB-SubCell"/>
</dbReference>
<dbReference type="GO" id="GO:0045277">
    <property type="term" value="C:respiratory chain complex IV"/>
    <property type="evidence" value="ECO:0000250"/>
    <property type="project" value="UniProtKB"/>
</dbReference>
<dbReference type="GO" id="GO:0005507">
    <property type="term" value="F:copper ion binding"/>
    <property type="evidence" value="ECO:0007669"/>
    <property type="project" value="InterPro"/>
</dbReference>
<dbReference type="GO" id="GO:0004129">
    <property type="term" value="F:cytochrome-c oxidase activity"/>
    <property type="evidence" value="ECO:0007669"/>
    <property type="project" value="UniProtKB-EC"/>
</dbReference>
<dbReference type="GO" id="GO:0042773">
    <property type="term" value="P:ATP synthesis coupled electron transport"/>
    <property type="evidence" value="ECO:0007669"/>
    <property type="project" value="TreeGrafter"/>
</dbReference>
<dbReference type="CDD" id="cd13912">
    <property type="entry name" value="CcO_II_C"/>
    <property type="match status" value="1"/>
</dbReference>
<dbReference type="FunFam" id="1.10.287.90:FF:000001">
    <property type="entry name" value="Cytochrome c oxidase subunit 2"/>
    <property type="match status" value="1"/>
</dbReference>
<dbReference type="FunFam" id="2.60.40.420:FF:000001">
    <property type="entry name" value="Cytochrome c oxidase subunit 2"/>
    <property type="match status" value="1"/>
</dbReference>
<dbReference type="Gene3D" id="1.10.287.90">
    <property type="match status" value="1"/>
</dbReference>
<dbReference type="Gene3D" id="2.60.40.420">
    <property type="entry name" value="Cupredoxins - blue copper proteins"/>
    <property type="match status" value="1"/>
</dbReference>
<dbReference type="InterPro" id="IPR045187">
    <property type="entry name" value="CcO_II"/>
</dbReference>
<dbReference type="InterPro" id="IPR002429">
    <property type="entry name" value="CcO_II-like_C"/>
</dbReference>
<dbReference type="InterPro" id="IPR034210">
    <property type="entry name" value="CcO_II_C"/>
</dbReference>
<dbReference type="InterPro" id="IPR001505">
    <property type="entry name" value="Copper_CuA"/>
</dbReference>
<dbReference type="InterPro" id="IPR008972">
    <property type="entry name" value="Cupredoxin"/>
</dbReference>
<dbReference type="InterPro" id="IPR014222">
    <property type="entry name" value="Cyt_c_oxidase_su2"/>
</dbReference>
<dbReference type="InterPro" id="IPR011759">
    <property type="entry name" value="Cyt_c_oxidase_su2_TM_dom"/>
</dbReference>
<dbReference type="InterPro" id="IPR036257">
    <property type="entry name" value="Cyt_c_oxidase_su2_TM_sf"/>
</dbReference>
<dbReference type="NCBIfam" id="TIGR02866">
    <property type="entry name" value="CoxB"/>
    <property type="match status" value="1"/>
</dbReference>
<dbReference type="PANTHER" id="PTHR22888:SF9">
    <property type="entry name" value="CYTOCHROME C OXIDASE SUBUNIT 2"/>
    <property type="match status" value="1"/>
</dbReference>
<dbReference type="PANTHER" id="PTHR22888">
    <property type="entry name" value="CYTOCHROME C OXIDASE, SUBUNIT II"/>
    <property type="match status" value="1"/>
</dbReference>
<dbReference type="Pfam" id="PF00116">
    <property type="entry name" value="COX2"/>
    <property type="match status" value="1"/>
</dbReference>
<dbReference type="Pfam" id="PF02790">
    <property type="entry name" value="COX2_TM"/>
    <property type="match status" value="1"/>
</dbReference>
<dbReference type="PRINTS" id="PR01166">
    <property type="entry name" value="CYCOXIDASEII"/>
</dbReference>
<dbReference type="SUPFAM" id="SSF49503">
    <property type="entry name" value="Cupredoxins"/>
    <property type="match status" value="1"/>
</dbReference>
<dbReference type="SUPFAM" id="SSF81464">
    <property type="entry name" value="Cytochrome c oxidase subunit II-like, transmembrane region"/>
    <property type="match status" value="1"/>
</dbReference>
<dbReference type="PROSITE" id="PS00078">
    <property type="entry name" value="COX2"/>
    <property type="match status" value="1"/>
</dbReference>
<dbReference type="PROSITE" id="PS50857">
    <property type="entry name" value="COX2_CUA"/>
    <property type="match status" value="1"/>
</dbReference>
<dbReference type="PROSITE" id="PS50999">
    <property type="entry name" value="COX2_TM"/>
    <property type="match status" value="1"/>
</dbReference>